<keyword id="KW-0001">2Fe-2S</keyword>
<keyword id="KW-0007">Acetylation</keyword>
<keyword id="KW-0408">Iron</keyword>
<keyword id="KW-0411">Iron-sulfur</keyword>
<keyword id="KW-0479">Metal-binding</keyword>
<keyword id="KW-0496">Mitochondrion</keyword>
<keyword id="KW-1185">Reference proteome</keyword>
<keyword id="KW-0809">Transit peptide</keyword>
<protein>
    <recommendedName>
        <fullName>CDGSH iron-sulfur domain-containing protein 3, mitochondrial</fullName>
    </recommendedName>
    <alternativeName>
        <fullName>Melanoma nuclear protein 13</fullName>
    </alternativeName>
</protein>
<accession>B1AR13</accession>
<accession>B1AR11</accession>
<accession>B1AR12</accession>
<name>CISD3_MOUSE</name>
<evidence type="ECO:0000250" key="1">
    <source>
        <dbReference type="UniProtKB" id="P0C7P0"/>
    </source>
</evidence>
<evidence type="ECO:0000255" key="2"/>
<evidence type="ECO:0000305" key="3"/>
<evidence type="ECO:0007744" key="4">
    <source>
    </source>
</evidence>
<evidence type="ECO:0007744" key="5">
    <source>
    </source>
</evidence>
<feature type="transit peptide" description="Mitochondrion" evidence="2">
    <location>
        <begin position="1"/>
        <end status="unknown"/>
    </location>
</feature>
<feature type="chain" id="PRO_0000341406" description="CDGSH iron-sulfur domain-containing protein 3, mitochondrial">
    <location>
        <begin status="unknown"/>
        <end position="137"/>
    </location>
</feature>
<feature type="binding site" evidence="1">
    <location>
        <position position="70"/>
    </location>
    <ligand>
        <name>[2Fe-2S] cluster</name>
        <dbReference type="ChEBI" id="CHEBI:190135"/>
        <label>1</label>
    </ligand>
</feature>
<feature type="binding site" evidence="1">
    <location>
        <position position="72"/>
    </location>
    <ligand>
        <name>[2Fe-2S] cluster</name>
        <dbReference type="ChEBI" id="CHEBI:190135"/>
        <label>1</label>
    </ligand>
</feature>
<feature type="binding site" evidence="1">
    <location>
        <position position="81"/>
    </location>
    <ligand>
        <name>[2Fe-2S] cluster</name>
        <dbReference type="ChEBI" id="CHEBI:190135"/>
        <label>1</label>
    </ligand>
</feature>
<feature type="binding site" evidence="1">
    <location>
        <position position="85"/>
    </location>
    <ligand>
        <name>[2Fe-2S] cluster</name>
        <dbReference type="ChEBI" id="CHEBI:190135"/>
        <label>1</label>
    </ligand>
</feature>
<feature type="binding site" evidence="1">
    <location>
        <position position="108"/>
    </location>
    <ligand>
        <name>[2Fe-2S] cluster</name>
        <dbReference type="ChEBI" id="CHEBI:190135"/>
        <label>2</label>
    </ligand>
</feature>
<feature type="binding site" evidence="1">
    <location>
        <position position="110"/>
    </location>
    <ligand>
        <name>[2Fe-2S] cluster</name>
        <dbReference type="ChEBI" id="CHEBI:190135"/>
        <label>2</label>
    </ligand>
</feature>
<feature type="binding site" evidence="1">
    <location>
        <position position="119"/>
    </location>
    <ligand>
        <name>[2Fe-2S] cluster</name>
        <dbReference type="ChEBI" id="CHEBI:190135"/>
        <label>2</label>
    </ligand>
</feature>
<feature type="binding site" evidence="1">
    <location>
        <position position="123"/>
    </location>
    <ligand>
        <name>[2Fe-2S] cluster</name>
        <dbReference type="ChEBI" id="CHEBI:190135"/>
        <label>2</label>
    </ligand>
</feature>
<feature type="modified residue" description="N6-acetyllysine; alternate" evidence="1">
    <location>
        <position position="65"/>
    </location>
</feature>
<feature type="modified residue" description="N6-succinyllysine; alternate" evidence="5">
    <location>
        <position position="65"/>
    </location>
</feature>
<feature type="modified residue" description="N6-acetyllysine" evidence="4">
    <location>
        <position position="96"/>
    </location>
</feature>
<feature type="modified residue" description="N6-acetyllysine; alternate" evidence="4">
    <location>
        <position position="124"/>
    </location>
</feature>
<feature type="modified residue" description="N6-succinyllysine; alternate" evidence="5">
    <location>
        <position position="124"/>
    </location>
</feature>
<organism>
    <name type="scientific">Mus musculus</name>
    <name type="common">Mouse</name>
    <dbReference type="NCBI Taxonomy" id="10090"/>
    <lineage>
        <taxon>Eukaryota</taxon>
        <taxon>Metazoa</taxon>
        <taxon>Chordata</taxon>
        <taxon>Craniata</taxon>
        <taxon>Vertebrata</taxon>
        <taxon>Euteleostomi</taxon>
        <taxon>Mammalia</taxon>
        <taxon>Eutheria</taxon>
        <taxon>Euarchontoglires</taxon>
        <taxon>Glires</taxon>
        <taxon>Rodentia</taxon>
        <taxon>Myomorpha</taxon>
        <taxon>Muroidea</taxon>
        <taxon>Muridae</taxon>
        <taxon>Murinae</taxon>
        <taxon>Mus</taxon>
        <taxon>Mus</taxon>
    </lineage>
</organism>
<proteinExistence type="evidence at protein level"/>
<gene>
    <name type="primary">Cisd3</name>
    <name type="synonym">Mel-13</name>
    <name type="synonym">Mel13</name>
</gene>
<sequence length="137" mass="15676">MGFRRLSFPTDFIFLFPNHICLPALSKPYQRREISSWLARWFPKDPAKPVVAQKTPIRLELVAGKTYRWCVCGRSKNQPFCDGSHFFQRTGLSPLKFKAQETRTVALCTCKATQRPPYCDGTHKSEQVQKAEVGSPL</sequence>
<comment type="function">
    <text evidence="1">Can transfer its iron-sulfur clusters to the apoferrodoxins FDX1 and FDX2. Contributes to mitochondrial iron homeostasis and in maintaining normal levels of free iron and reactive oxygen species, and thereby contributes to normal mitochondrial function.</text>
</comment>
<comment type="cofactor">
    <cofactor evidence="1">
        <name>[2Fe-2S] cluster</name>
        <dbReference type="ChEBI" id="CHEBI:190135"/>
    </cofactor>
    <text evidence="1">Binds 2 [2Fe-2S] clusters per subunit.</text>
</comment>
<comment type="subunit">
    <text evidence="1">Monomer.</text>
</comment>
<comment type="subcellular location">
    <subcellularLocation>
        <location evidence="1">Mitochondrion</location>
    </subcellularLocation>
</comment>
<comment type="similarity">
    <text evidence="3">Belongs to the CISD protein family.</text>
</comment>
<comment type="sequence caution" evidence="3">
    <conflict type="erroneous gene model prediction">
        <sequence resource="EMBL-CDS" id="CAM27408"/>
    </conflict>
</comment>
<comment type="sequence caution" evidence="3">
    <conflict type="erroneous gene model prediction">
        <sequence resource="EMBL-CDS" id="CAM27409"/>
    </conflict>
</comment>
<dbReference type="EMBL" id="AL596123">
    <property type="protein sequence ID" value="CAM27408.1"/>
    <property type="status" value="ALT_SEQ"/>
    <property type="molecule type" value="Genomic_DNA"/>
</dbReference>
<dbReference type="EMBL" id="AL596123">
    <property type="protein sequence ID" value="CAM27409.1"/>
    <property type="status" value="ALT_SEQ"/>
    <property type="molecule type" value="Genomic_DNA"/>
</dbReference>
<dbReference type="EMBL" id="AL596123">
    <property type="protein sequence ID" value="CAM27410.1"/>
    <property type="molecule type" value="Genomic_DNA"/>
</dbReference>
<dbReference type="CCDS" id="CCDS48896.1"/>
<dbReference type="RefSeq" id="NP_001078969.2">
    <property type="nucleotide sequence ID" value="NM_001085500.3"/>
</dbReference>
<dbReference type="SMR" id="B1AR13"/>
<dbReference type="BioGRID" id="229853">
    <property type="interactions" value="4"/>
</dbReference>
<dbReference type="FunCoup" id="B1AR13">
    <property type="interactions" value="391"/>
</dbReference>
<dbReference type="STRING" id="10090.ENSMUSP00000103209"/>
<dbReference type="GlyGen" id="B1AR13">
    <property type="glycosylation" value="1 site, 1 O-linked glycan (1 site)"/>
</dbReference>
<dbReference type="iPTMnet" id="B1AR13"/>
<dbReference type="PhosphoSitePlus" id="B1AR13"/>
<dbReference type="SwissPalm" id="B1AR13"/>
<dbReference type="jPOST" id="B1AR13"/>
<dbReference type="PaxDb" id="10090-ENSMUSP00000103209"/>
<dbReference type="PeptideAtlas" id="B1AR13"/>
<dbReference type="ProteomicsDB" id="279084"/>
<dbReference type="Pumba" id="B1AR13"/>
<dbReference type="Antibodypedia" id="75426">
    <property type="antibodies" value="8 antibodies from 4 providers"/>
</dbReference>
<dbReference type="Ensembl" id="ENSMUST00000107583.3">
    <property type="protein sequence ID" value="ENSMUSP00000103209.3"/>
    <property type="gene ID" value="ENSMUSG00000078695.9"/>
</dbReference>
<dbReference type="GeneID" id="217149"/>
<dbReference type="KEGG" id="mmu:217149"/>
<dbReference type="UCSC" id="uc007lek.2">
    <property type="organism name" value="mouse"/>
</dbReference>
<dbReference type="AGR" id="MGI:101788"/>
<dbReference type="CTD" id="284106"/>
<dbReference type="MGI" id="MGI:101788">
    <property type="gene designation" value="Cisd3"/>
</dbReference>
<dbReference type="VEuPathDB" id="HostDB:ENSMUSG00000078695"/>
<dbReference type="eggNOG" id="KOG4605">
    <property type="taxonomic scope" value="Eukaryota"/>
</dbReference>
<dbReference type="GeneTree" id="ENSGT00390000004574"/>
<dbReference type="InParanoid" id="B1AR13"/>
<dbReference type="OrthoDB" id="15717at2759"/>
<dbReference type="PhylomeDB" id="B1AR13"/>
<dbReference type="TreeFam" id="TF313111"/>
<dbReference type="BioGRID-ORCS" id="217149">
    <property type="hits" value="4 hits in 76 CRISPR screens"/>
</dbReference>
<dbReference type="CD-CODE" id="CE726F99">
    <property type="entry name" value="Postsynaptic density"/>
</dbReference>
<dbReference type="ChiTaRS" id="Cisd3">
    <property type="organism name" value="mouse"/>
</dbReference>
<dbReference type="PRO" id="PR:B1AR13"/>
<dbReference type="Proteomes" id="UP000000589">
    <property type="component" value="Chromosome 11"/>
</dbReference>
<dbReference type="RNAct" id="B1AR13">
    <property type="molecule type" value="protein"/>
</dbReference>
<dbReference type="Bgee" id="ENSMUSG00000078695">
    <property type="expression patterns" value="Expressed in white adipose tissue and 63 other cell types or tissues"/>
</dbReference>
<dbReference type="ExpressionAtlas" id="B1AR13">
    <property type="expression patterns" value="baseline and differential"/>
</dbReference>
<dbReference type="GO" id="GO:0005739">
    <property type="term" value="C:mitochondrion"/>
    <property type="evidence" value="ECO:0007005"/>
    <property type="project" value="MGI"/>
</dbReference>
<dbReference type="GO" id="GO:0051537">
    <property type="term" value="F:2 iron, 2 sulfur cluster binding"/>
    <property type="evidence" value="ECO:0000250"/>
    <property type="project" value="UniProtKB"/>
</dbReference>
<dbReference type="GO" id="GO:0046872">
    <property type="term" value="F:metal ion binding"/>
    <property type="evidence" value="ECO:0000250"/>
    <property type="project" value="UniProtKB"/>
</dbReference>
<dbReference type="GO" id="GO:0051604">
    <property type="term" value="P:protein maturation"/>
    <property type="evidence" value="ECO:0000250"/>
    <property type="project" value="UniProtKB"/>
</dbReference>
<dbReference type="Gene3D" id="3.40.5.90">
    <property type="entry name" value="CDGSH iron-sulfur domain, mitoNEET-type"/>
    <property type="match status" value="2"/>
</dbReference>
<dbReference type="InterPro" id="IPR052950">
    <property type="entry name" value="CISD"/>
</dbReference>
<dbReference type="InterPro" id="IPR018967">
    <property type="entry name" value="FeS-contain_CDGSH-typ"/>
</dbReference>
<dbReference type="InterPro" id="IPR042216">
    <property type="entry name" value="MitoNEET_CISD"/>
</dbReference>
<dbReference type="PANTHER" id="PTHR46491">
    <property type="entry name" value="CDGSH IRON SULFUR DOMAIN PROTEIN HOMOLOG"/>
    <property type="match status" value="1"/>
</dbReference>
<dbReference type="PANTHER" id="PTHR46491:SF3">
    <property type="entry name" value="CDGSH IRON-SULFUR DOMAIN-CONTAINING PROTEIN 3, MITOCHONDRIAL"/>
    <property type="match status" value="1"/>
</dbReference>
<dbReference type="Pfam" id="PF09360">
    <property type="entry name" value="zf-CDGSH"/>
    <property type="match status" value="2"/>
</dbReference>
<dbReference type="SMART" id="SM00704">
    <property type="entry name" value="ZnF_CDGSH"/>
    <property type="match status" value="2"/>
</dbReference>
<reference key="1">
    <citation type="journal article" date="2009" name="PLoS Biol.">
        <title>Lineage-specific biology revealed by a finished genome assembly of the mouse.</title>
        <authorList>
            <person name="Church D.M."/>
            <person name="Goodstadt L."/>
            <person name="Hillier L.W."/>
            <person name="Zody M.C."/>
            <person name="Goldstein S."/>
            <person name="She X."/>
            <person name="Bult C.J."/>
            <person name="Agarwala R."/>
            <person name="Cherry J.L."/>
            <person name="DiCuccio M."/>
            <person name="Hlavina W."/>
            <person name="Kapustin Y."/>
            <person name="Meric P."/>
            <person name="Maglott D."/>
            <person name="Birtle Z."/>
            <person name="Marques A.C."/>
            <person name="Graves T."/>
            <person name="Zhou S."/>
            <person name="Teague B."/>
            <person name="Potamousis K."/>
            <person name="Churas C."/>
            <person name="Place M."/>
            <person name="Herschleb J."/>
            <person name="Runnheim R."/>
            <person name="Forrest D."/>
            <person name="Amos-Landgraf J."/>
            <person name="Schwartz D.C."/>
            <person name="Cheng Z."/>
            <person name="Lindblad-Toh K."/>
            <person name="Eichler E.E."/>
            <person name="Ponting C.P."/>
        </authorList>
    </citation>
    <scope>NUCLEOTIDE SEQUENCE [LARGE SCALE GENOMIC DNA]</scope>
    <source>
        <strain>C57BL/6J</strain>
    </source>
</reference>
<reference key="2">
    <citation type="journal article" date="1996" name="Biochim. Biophys. Acta">
        <title>Cloning and characterization of two transcripts generated from the mel-13 gene positioned adjacent to the mammalian Polycomb group-related gene mel-18.</title>
        <authorList>
            <person name="Tetsu O."/>
            <person name="Kanno R."/>
            <person name="Isono K."/>
            <person name="Taniguchi M."/>
            <person name="Kanno M."/>
        </authorList>
    </citation>
    <scope>IDENTIFICATION</scope>
</reference>
<reference key="3">
    <citation type="journal article" date="2010" name="Cell">
        <title>A tissue-specific atlas of mouse protein phosphorylation and expression.</title>
        <authorList>
            <person name="Huttlin E.L."/>
            <person name="Jedrychowski M.P."/>
            <person name="Elias J.E."/>
            <person name="Goswami T."/>
            <person name="Rad R."/>
            <person name="Beausoleil S.A."/>
            <person name="Villen J."/>
            <person name="Haas W."/>
            <person name="Sowa M.E."/>
            <person name="Gygi S.P."/>
        </authorList>
    </citation>
    <scope>IDENTIFICATION BY MASS SPECTROMETRY [LARGE SCALE ANALYSIS]</scope>
    <source>
        <tissue>Brown adipose tissue</tissue>
        <tissue>Heart</tissue>
        <tissue>Liver</tissue>
    </source>
</reference>
<reference key="4">
    <citation type="journal article" date="2013" name="Mol. Cell">
        <title>SIRT5-mediated lysine desuccinylation impacts diverse metabolic pathways.</title>
        <authorList>
            <person name="Park J."/>
            <person name="Chen Y."/>
            <person name="Tishkoff D.X."/>
            <person name="Peng C."/>
            <person name="Tan M."/>
            <person name="Dai L."/>
            <person name="Xie Z."/>
            <person name="Zhang Y."/>
            <person name="Zwaans B.M."/>
            <person name="Skinner M.E."/>
            <person name="Lombard D.B."/>
            <person name="Zhao Y."/>
        </authorList>
    </citation>
    <scope>SUCCINYLATION [LARGE SCALE ANALYSIS] AT LYS-65 AND LYS-124</scope>
    <scope>IDENTIFICATION BY MASS SPECTROMETRY [LARGE SCALE ANALYSIS]</scope>
    <source>
        <tissue>Embryonic fibroblast</tissue>
        <tissue>Liver</tissue>
    </source>
</reference>
<reference key="5">
    <citation type="journal article" date="2013" name="Proc. Natl. Acad. Sci. U.S.A.">
        <title>Label-free quantitative proteomics of the lysine acetylome in mitochondria identifies substrates of SIRT3 in metabolic pathways.</title>
        <authorList>
            <person name="Rardin M.J."/>
            <person name="Newman J.C."/>
            <person name="Held J.M."/>
            <person name="Cusack M.P."/>
            <person name="Sorensen D.J."/>
            <person name="Li B."/>
            <person name="Schilling B."/>
            <person name="Mooney S.D."/>
            <person name="Kahn C.R."/>
            <person name="Verdin E."/>
            <person name="Gibson B.W."/>
        </authorList>
    </citation>
    <scope>ACETYLATION [LARGE SCALE ANALYSIS] AT LYS-96 AND LYS-124</scope>
    <scope>IDENTIFICATION BY MASS SPECTROMETRY [LARGE SCALE ANALYSIS]</scope>
    <source>
        <tissue>Liver</tissue>
    </source>
</reference>